<gene>
    <name evidence="1" type="primary">pheS</name>
    <name type="ordered locus">STM1337</name>
</gene>
<sequence length="327" mass="36755">MSHLAELVANAAAAINQASDVAALDNVRVEYLGKKGHLTLQMTTLRDLPPEERPAAGAVINAAKEQVQQALNARKAELESAALNARLAAETIDISLPGRRIENGGLHPVTRTIDRIESFFGELGFTVATGPEIEDDYHNFDALNIPGHHPARADHDTFWFDATRLLRTQTSGVQIRTMKAQQPPIRIIAPGRVYRNDYDQTHTPMFHQMEGLIVDTNISFTNLKGTLHDFLRNFFEEDLQIRFRPSYFPFTEPSAEVDVMGKNGKWLEVLGCGMVHPNVLRNVGIDPEIYSGFAFGMGMERLTMLRYGVTDLRSFFENDLRFLKQFK</sequence>
<feature type="chain" id="PRO_0000126755" description="Phenylalanine--tRNA ligase alpha subunit">
    <location>
        <begin position="1"/>
        <end position="327"/>
    </location>
</feature>
<feature type="binding site" evidence="1">
    <location>
        <position position="252"/>
    </location>
    <ligand>
        <name>Mg(2+)</name>
        <dbReference type="ChEBI" id="CHEBI:18420"/>
        <note>shared with beta subunit</note>
    </ligand>
</feature>
<accession>P67038</accession>
<accession>Q8XGJ3</accession>
<dbReference type="EC" id="6.1.1.20" evidence="1"/>
<dbReference type="EMBL" id="AE006468">
    <property type="protein sequence ID" value="AAL20262.1"/>
    <property type="molecule type" value="Genomic_DNA"/>
</dbReference>
<dbReference type="RefSeq" id="NP_460303.1">
    <property type="nucleotide sequence ID" value="NC_003197.2"/>
</dbReference>
<dbReference type="RefSeq" id="WP_000018570.1">
    <property type="nucleotide sequence ID" value="NC_003197.2"/>
</dbReference>
<dbReference type="SMR" id="P67038"/>
<dbReference type="STRING" id="99287.STM1337"/>
<dbReference type="PaxDb" id="99287-STM1337"/>
<dbReference type="GeneID" id="1252855"/>
<dbReference type="KEGG" id="stm:STM1337"/>
<dbReference type="PATRIC" id="fig|99287.12.peg.1420"/>
<dbReference type="HOGENOM" id="CLU_025086_0_1_6"/>
<dbReference type="OMA" id="EIMGCGM"/>
<dbReference type="PhylomeDB" id="P67038"/>
<dbReference type="BioCyc" id="SENT99287:STM1337-MONOMER"/>
<dbReference type="Proteomes" id="UP000001014">
    <property type="component" value="Chromosome"/>
</dbReference>
<dbReference type="GO" id="GO:0005737">
    <property type="term" value="C:cytoplasm"/>
    <property type="evidence" value="ECO:0000318"/>
    <property type="project" value="GO_Central"/>
</dbReference>
<dbReference type="GO" id="GO:0005524">
    <property type="term" value="F:ATP binding"/>
    <property type="evidence" value="ECO:0007669"/>
    <property type="project" value="UniProtKB-UniRule"/>
</dbReference>
<dbReference type="GO" id="GO:0000287">
    <property type="term" value="F:magnesium ion binding"/>
    <property type="evidence" value="ECO:0007669"/>
    <property type="project" value="UniProtKB-UniRule"/>
</dbReference>
<dbReference type="GO" id="GO:0004826">
    <property type="term" value="F:phenylalanine-tRNA ligase activity"/>
    <property type="evidence" value="ECO:0000318"/>
    <property type="project" value="GO_Central"/>
</dbReference>
<dbReference type="GO" id="GO:0000049">
    <property type="term" value="F:tRNA binding"/>
    <property type="evidence" value="ECO:0007669"/>
    <property type="project" value="InterPro"/>
</dbReference>
<dbReference type="GO" id="GO:0006432">
    <property type="term" value="P:phenylalanyl-tRNA aminoacylation"/>
    <property type="evidence" value="ECO:0000318"/>
    <property type="project" value="GO_Central"/>
</dbReference>
<dbReference type="CDD" id="cd00496">
    <property type="entry name" value="PheRS_alpha_core"/>
    <property type="match status" value="1"/>
</dbReference>
<dbReference type="FunFam" id="3.30.930.10:FF:000003">
    <property type="entry name" value="Phenylalanine--tRNA ligase alpha subunit"/>
    <property type="match status" value="1"/>
</dbReference>
<dbReference type="Gene3D" id="3.30.930.10">
    <property type="entry name" value="Bira Bifunctional Protein, Domain 2"/>
    <property type="match status" value="1"/>
</dbReference>
<dbReference type="HAMAP" id="MF_00281">
    <property type="entry name" value="Phe_tRNA_synth_alpha1"/>
    <property type="match status" value="1"/>
</dbReference>
<dbReference type="InterPro" id="IPR006195">
    <property type="entry name" value="aa-tRNA-synth_II"/>
</dbReference>
<dbReference type="InterPro" id="IPR045864">
    <property type="entry name" value="aa-tRNA-synth_II/BPL/LPL"/>
</dbReference>
<dbReference type="InterPro" id="IPR004529">
    <property type="entry name" value="Phe-tRNA-synth_IIc_asu"/>
</dbReference>
<dbReference type="InterPro" id="IPR004188">
    <property type="entry name" value="Phe-tRNA_ligase_II_N"/>
</dbReference>
<dbReference type="InterPro" id="IPR022911">
    <property type="entry name" value="Phe_tRNA_ligase_alpha1_bac"/>
</dbReference>
<dbReference type="InterPro" id="IPR002319">
    <property type="entry name" value="Phenylalanyl-tRNA_Synthase"/>
</dbReference>
<dbReference type="InterPro" id="IPR010978">
    <property type="entry name" value="tRNA-bd_arm"/>
</dbReference>
<dbReference type="NCBIfam" id="TIGR00468">
    <property type="entry name" value="pheS"/>
    <property type="match status" value="1"/>
</dbReference>
<dbReference type="PANTHER" id="PTHR11538:SF41">
    <property type="entry name" value="PHENYLALANINE--TRNA LIGASE, MITOCHONDRIAL"/>
    <property type="match status" value="1"/>
</dbReference>
<dbReference type="PANTHER" id="PTHR11538">
    <property type="entry name" value="PHENYLALANYL-TRNA SYNTHETASE"/>
    <property type="match status" value="1"/>
</dbReference>
<dbReference type="Pfam" id="PF02912">
    <property type="entry name" value="Phe_tRNA-synt_N"/>
    <property type="match status" value="1"/>
</dbReference>
<dbReference type="Pfam" id="PF01409">
    <property type="entry name" value="tRNA-synt_2d"/>
    <property type="match status" value="1"/>
</dbReference>
<dbReference type="SUPFAM" id="SSF55681">
    <property type="entry name" value="Class II aaRS and biotin synthetases"/>
    <property type="match status" value="1"/>
</dbReference>
<dbReference type="SUPFAM" id="SSF46589">
    <property type="entry name" value="tRNA-binding arm"/>
    <property type="match status" value="1"/>
</dbReference>
<dbReference type="PROSITE" id="PS50862">
    <property type="entry name" value="AA_TRNA_LIGASE_II"/>
    <property type="match status" value="1"/>
</dbReference>
<reference key="1">
    <citation type="journal article" date="2001" name="Nature">
        <title>Complete genome sequence of Salmonella enterica serovar Typhimurium LT2.</title>
        <authorList>
            <person name="McClelland M."/>
            <person name="Sanderson K.E."/>
            <person name="Spieth J."/>
            <person name="Clifton S.W."/>
            <person name="Latreille P."/>
            <person name="Courtney L."/>
            <person name="Porwollik S."/>
            <person name="Ali J."/>
            <person name="Dante M."/>
            <person name="Du F."/>
            <person name="Hou S."/>
            <person name="Layman D."/>
            <person name="Leonard S."/>
            <person name="Nguyen C."/>
            <person name="Scott K."/>
            <person name="Holmes A."/>
            <person name="Grewal N."/>
            <person name="Mulvaney E."/>
            <person name="Ryan E."/>
            <person name="Sun H."/>
            <person name="Florea L."/>
            <person name="Miller W."/>
            <person name="Stoneking T."/>
            <person name="Nhan M."/>
            <person name="Waterston R."/>
            <person name="Wilson R.K."/>
        </authorList>
    </citation>
    <scope>NUCLEOTIDE SEQUENCE [LARGE SCALE GENOMIC DNA]</scope>
    <source>
        <strain>LT2 / SGSC1412 / ATCC 700720</strain>
    </source>
</reference>
<name>SYFA_SALTY</name>
<keyword id="KW-0030">Aminoacyl-tRNA synthetase</keyword>
<keyword id="KW-0067">ATP-binding</keyword>
<keyword id="KW-0963">Cytoplasm</keyword>
<keyword id="KW-0436">Ligase</keyword>
<keyword id="KW-0460">Magnesium</keyword>
<keyword id="KW-0479">Metal-binding</keyword>
<keyword id="KW-0547">Nucleotide-binding</keyword>
<keyword id="KW-0648">Protein biosynthesis</keyword>
<keyword id="KW-1185">Reference proteome</keyword>
<evidence type="ECO:0000255" key="1">
    <source>
        <dbReference type="HAMAP-Rule" id="MF_00281"/>
    </source>
</evidence>
<protein>
    <recommendedName>
        <fullName evidence="1">Phenylalanine--tRNA ligase alpha subunit</fullName>
        <ecNumber evidence="1">6.1.1.20</ecNumber>
    </recommendedName>
    <alternativeName>
        <fullName evidence="1">Phenylalanyl-tRNA synthetase alpha subunit</fullName>
        <shortName evidence="1">PheRS</shortName>
    </alternativeName>
</protein>
<organism>
    <name type="scientific">Salmonella typhimurium (strain LT2 / SGSC1412 / ATCC 700720)</name>
    <dbReference type="NCBI Taxonomy" id="99287"/>
    <lineage>
        <taxon>Bacteria</taxon>
        <taxon>Pseudomonadati</taxon>
        <taxon>Pseudomonadota</taxon>
        <taxon>Gammaproteobacteria</taxon>
        <taxon>Enterobacterales</taxon>
        <taxon>Enterobacteriaceae</taxon>
        <taxon>Salmonella</taxon>
    </lineage>
</organism>
<proteinExistence type="inferred from homology"/>
<comment type="catalytic activity">
    <reaction evidence="1">
        <text>tRNA(Phe) + L-phenylalanine + ATP = L-phenylalanyl-tRNA(Phe) + AMP + diphosphate + H(+)</text>
        <dbReference type="Rhea" id="RHEA:19413"/>
        <dbReference type="Rhea" id="RHEA-COMP:9668"/>
        <dbReference type="Rhea" id="RHEA-COMP:9699"/>
        <dbReference type="ChEBI" id="CHEBI:15378"/>
        <dbReference type="ChEBI" id="CHEBI:30616"/>
        <dbReference type="ChEBI" id="CHEBI:33019"/>
        <dbReference type="ChEBI" id="CHEBI:58095"/>
        <dbReference type="ChEBI" id="CHEBI:78442"/>
        <dbReference type="ChEBI" id="CHEBI:78531"/>
        <dbReference type="ChEBI" id="CHEBI:456215"/>
        <dbReference type="EC" id="6.1.1.20"/>
    </reaction>
</comment>
<comment type="cofactor">
    <cofactor evidence="1">
        <name>Mg(2+)</name>
        <dbReference type="ChEBI" id="CHEBI:18420"/>
    </cofactor>
    <text evidence="1">Binds 2 magnesium ions per tetramer.</text>
</comment>
<comment type="subunit">
    <text evidence="1">Tetramer of two alpha and two beta subunits.</text>
</comment>
<comment type="subcellular location">
    <subcellularLocation>
        <location evidence="1">Cytoplasm</location>
    </subcellularLocation>
</comment>
<comment type="similarity">
    <text evidence="1">Belongs to the class-II aminoacyl-tRNA synthetase family. Phe-tRNA synthetase alpha subunit type 1 subfamily.</text>
</comment>